<organism>
    <name type="scientific">Drosophila virilis</name>
    <name type="common">Fruit fly</name>
    <dbReference type="NCBI Taxonomy" id="7244"/>
    <lineage>
        <taxon>Eukaryota</taxon>
        <taxon>Metazoa</taxon>
        <taxon>Ecdysozoa</taxon>
        <taxon>Arthropoda</taxon>
        <taxon>Hexapoda</taxon>
        <taxon>Insecta</taxon>
        <taxon>Pterygota</taxon>
        <taxon>Neoptera</taxon>
        <taxon>Endopterygota</taxon>
        <taxon>Diptera</taxon>
        <taxon>Brachycera</taxon>
        <taxon>Muscomorpha</taxon>
        <taxon>Ephydroidea</taxon>
        <taxon>Drosophilidae</taxon>
        <taxon>Drosophila</taxon>
    </lineage>
</organism>
<sequence length="984" mass="110817">MAAAFAYRWLLCAAGIVNVLPIGAQRHTASDNPSTYNIGGVLSNSESELHFHTTIAHLNFDQQYVPRKVTYYDKTIRMDKNPIKTVFNVCDKLIEKRVYAVVVSHEQTSGDLSPAAVSYTSGFYSIPVIGISSRDAAFSDKNIHVSFLRTVPPYYHQADVWLELLSHFLYTKVIIIHSSDTDGRAILGRFQTTSQTYYDDVDVRATVELIVEFEPKLESFTEHLIDMKTAQSRVYLMYASTEDAQVIFRDAGEYNMTGEGHVWIVTEQALHANNTPDGVLGLQLEHAHSDKGHIRDSVYVLASAIKEMISNETIAEAPKDCGDSAVNWESGKRLFQYLKSRNITGETGQVAFDDNGDRIYAGYDVINIREHQKQHLVGKFSYDSLRAKMRMRINDSEIIWGGKQKRKPEGIMIPTHLKVLTIEEKPFVYVRRMGDDEFRCEPDERPCPLFNASDATTNEFCCRGYCIDLLIELSKRINFTYDLALSPDGQFGHYILRNNTGAMTLRKEWTGLIGELVNERADMIVAPLTINPERAEYIEFSKPFKYQGITILEKKPSRSSTLVSFLQPFSNTLWILVMVSVHVVALVLYLLDRFSPFGRFKLSHSDSNEEKALNLSSAVWFAWGVLLNSGIGEGTPRSFSARVLGMVWAGFAMIIVASYTANLAAFLVLERPKTKLSGINDARLRNTMENLTCATVKGSSVDMYFRRQVELSNMYRTMESNNYVTAEQAIQDVKKGKLMAFIWDSSRLEYEASKDCELVTAGELFGRSGYGVGLQKGSPWTDAVTLTILEFHESGFMEKLDKQWIFHGHVQQNCELFEKTPNTLGLKNMAGVFILVGVGIAGGVGLIIIEVIYKKHQVKKQKRLDIARHAADKWRGTIEKRKTIRASLAMQRQYNVGLMARQPPGTISLAVDKRRYPRLGQRLGPERAWPGDAADVLRTRRPYDLTKSGLVPPALGLGKTRPQQNPLPPRYSPGYTSDVSHLVV</sequence>
<proteinExistence type="inferred from homology"/>
<dbReference type="EMBL" id="CH940650">
    <property type="protein sequence ID" value="EDW68150.1"/>
    <property type="molecule type" value="Genomic_DNA"/>
</dbReference>
<dbReference type="RefSeq" id="XP_002054630.1">
    <property type="nucleotide sequence ID" value="XM_002054594.4"/>
</dbReference>
<dbReference type="RefSeq" id="XP_015027744.1">
    <property type="nucleotide sequence ID" value="XM_015172258.3"/>
</dbReference>
<dbReference type="SMR" id="B4LZB5"/>
<dbReference type="FunCoup" id="B4LZB5">
    <property type="interactions" value="383"/>
</dbReference>
<dbReference type="STRING" id="7244.B4LZB5"/>
<dbReference type="GlyCosmos" id="B4LZB5">
    <property type="glycosylation" value="8 sites, No reported glycans"/>
</dbReference>
<dbReference type="EnsemblMetazoa" id="FBtr0240485">
    <property type="protein sequence ID" value="FBpp0238977"/>
    <property type="gene ID" value="FBgn0211640"/>
</dbReference>
<dbReference type="EnsemblMetazoa" id="FBtr0444757">
    <property type="protein sequence ID" value="FBpp0401071"/>
    <property type="gene ID" value="FBgn0211640"/>
</dbReference>
<dbReference type="EnsemblMetazoa" id="XM_002054594.3">
    <property type="protein sequence ID" value="XP_002054630.1"/>
    <property type="gene ID" value="LOC6630672"/>
</dbReference>
<dbReference type="EnsemblMetazoa" id="XM_015172258.2">
    <property type="protein sequence ID" value="XP_015027744.1"/>
    <property type="gene ID" value="LOC6630672"/>
</dbReference>
<dbReference type="GeneID" id="6630672"/>
<dbReference type="KEGG" id="dvi:6630672"/>
<dbReference type="CTD" id="40665"/>
<dbReference type="eggNOG" id="KOG4440">
    <property type="taxonomic scope" value="Eukaryota"/>
</dbReference>
<dbReference type="HOGENOM" id="CLU_007257_2_0_1"/>
<dbReference type="InParanoid" id="B4LZB5"/>
<dbReference type="OMA" id="FANNTPD"/>
<dbReference type="OrthoDB" id="5984008at2759"/>
<dbReference type="PhylomeDB" id="B4LZB5"/>
<dbReference type="Proteomes" id="UP000008792">
    <property type="component" value="Unassembled WGS sequence"/>
</dbReference>
<dbReference type="GO" id="GO:0017146">
    <property type="term" value="C:NMDA selective glutamate receptor complex"/>
    <property type="evidence" value="ECO:0000250"/>
    <property type="project" value="UniProtKB"/>
</dbReference>
<dbReference type="GO" id="GO:0014069">
    <property type="term" value="C:postsynaptic density"/>
    <property type="evidence" value="ECO:0007669"/>
    <property type="project" value="UniProtKB-SubCell"/>
</dbReference>
<dbReference type="GO" id="GO:0045211">
    <property type="term" value="C:postsynaptic membrane"/>
    <property type="evidence" value="ECO:0000250"/>
    <property type="project" value="UniProtKB"/>
</dbReference>
<dbReference type="GO" id="GO:0004970">
    <property type="term" value="F:glutamate-gated receptor activity"/>
    <property type="evidence" value="ECO:0000250"/>
    <property type="project" value="UniProtKB"/>
</dbReference>
<dbReference type="GO" id="GO:0004972">
    <property type="term" value="F:NMDA glutamate receptor activity"/>
    <property type="evidence" value="ECO:0007669"/>
    <property type="project" value="EnsemblMetazoa"/>
</dbReference>
<dbReference type="GO" id="GO:0048149">
    <property type="term" value="P:behavioral response to ethanol"/>
    <property type="evidence" value="ECO:0007669"/>
    <property type="project" value="EnsemblMetazoa"/>
</dbReference>
<dbReference type="GO" id="GO:0055074">
    <property type="term" value="P:calcium ion homeostasis"/>
    <property type="evidence" value="ECO:0000250"/>
    <property type="project" value="UniProtKB"/>
</dbReference>
<dbReference type="GO" id="GO:0007268">
    <property type="term" value="P:chemical synaptic transmission"/>
    <property type="evidence" value="ECO:0000250"/>
    <property type="project" value="UniProtKB"/>
</dbReference>
<dbReference type="GO" id="GO:0035235">
    <property type="term" value="P:ionotropic glutamate receptor signaling pathway"/>
    <property type="evidence" value="ECO:0000250"/>
    <property type="project" value="UniProtKB"/>
</dbReference>
<dbReference type="GO" id="GO:0007616">
    <property type="term" value="P:long-term memory"/>
    <property type="evidence" value="ECO:0000250"/>
    <property type="project" value="UniProtKB"/>
</dbReference>
<dbReference type="GO" id="GO:0072375">
    <property type="term" value="P:medium-term memory"/>
    <property type="evidence" value="ECO:0007669"/>
    <property type="project" value="EnsemblMetazoa"/>
</dbReference>
<dbReference type="GO" id="GO:0008355">
    <property type="term" value="P:olfactory learning"/>
    <property type="evidence" value="ECO:0000250"/>
    <property type="project" value="UniProtKB"/>
</dbReference>
<dbReference type="GO" id="GO:0042331">
    <property type="term" value="P:phototaxis"/>
    <property type="evidence" value="ECO:0007669"/>
    <property type="project" value="EnsemblMetazoa"/>
</dbReference>
<dbReference type="GO" id="GO:0042391">
    <property type="term" value="P:regulation of membrane potential"/>
    <property type="evidence" value="ECO:0000250"/>
    <property type="project" value="UniProtKB"/>
</dbReference>
<dbReference type="GO" id="GO:0050975">
    <property type="term" value="P:sensory perception of touch"/>
    <property type="evidence" value="ECO:0007669"/>
    <property type="project" value="EnsemblMetazoa"/>
</dbReference>
<dbReference type="CDD" id="cd06379">
    <property type="entry name" value="PBP1_iGluR_NMDA_NR1"/>
    <property type="match status" value="1"/>
</dbReference>
<dbReference type="CDD" id="cd13719">
    <property type="entry name" value="PBP2_iGluR_NMDA_Nr1"/>
    <property type="match status" value="1"/>
</dbReference>
<dbReference type="FunFam" id="3.40.190.10:FF:000177">
    <property type="entry name" value="Glutamate [NMDA] receptor subunit 1"/>
    <property type="match status" value="1"/>
</dbReference>
<dbReference type="FunFam" id="3.40.50.2300:FF:000266">
    <property type="entry name" value="Glutamate [NMDA] receptor subunit 1"/>
    <property type="match status" value="1"/>
</dbReference>
<dbReference type="FunFam" id="3.40.190.10:FF:000010">
    <property type="entry name" value="glutamate receptor ionotropic, NMDA 1 isoform X1"/>
    <property type="match status" value="1"/>
</dbReference>
<dbReference type="FunFam" id="3.40.50.2300:FF:000025">
    <property type="entry name" value="glutamate receptor ionotropic, NMDA 1 isoform X1"/>
    <property type="match status" value="1"/>
</dbReference>
<dbReference type="Gene3D" id="1.10.287.70">
    <property type="match status" value="1"/>
</dbReference>
<dbReference type="Gene3D" id="3.40.50.2300">
    <property type="match status" value="2"/>
</dbReference>
<dbReference type="Gene3D" id="3.40.190.10">
    <property type="entry name" value="Periplasmic binding protein-like II"/>
    <property type="match status" value="2"/>
</dbReference>
<dbReference type="InterPro" id="IPR001828">
    <property type="entry name" value="ANF_lig-bd_rcpt"/>
</dbReference>
<dbReference type="InterPro" id="IPR018882">
    <property type="entry name" value="CaM-bd_C0_NMDA_rcpt_NR1"/>
</dbReference>
<dbReference type="InterPro" id="IPR019594">
    <property type="entry name" value="Glu/Gly-bd"/>
</dbReference>
<dbReference type="InterPro" id="IPR001508">
    <property type="entry name" value="Iono_Glu_rcpt_met"/>
</dbReference>
<dbReference type="InterPro" id="IPR015683">
    <property type="entry name" value="Ionotropic_Glu_rcpt"/>
</dbReference>
<dbReference type="InterPro" id="IPR001320">
    <property type="entry name" value="Iontro_rcpt_C"/>
</dbReference>
<dbReference type="InterPro" id="IPR049872">
    <property type="entry name" value="NMDA1-like_ligand-bd"/>
</dbReference>
<dbReference type="InterPro" id="IPR049873">
    <property type="entry name" value="NMDA1-like_N"/>
</dbReference>
<dbReference type="InterPro" id="IPR028082">
    <property type="entry name" value="Peripla_BP_I"/>
</dbReference>
<dbReference type="PANTHER" id="PTHR18966">
    <property type="entry name" value="IONOTROPIC GLUTAMATE RECEPTOR"/>
    <property type="match status" value="1"/>
</dbReference>
<dbReference type="Pfam" id="PF01094">
    <property type="entry name" value="ANF_receptor"/>
    <property type="match status" value="1"/>
</dbReference>
<dbReference type="Pfam" id="PF10562">
    <property type="entry name" value="CaM_bdg_C0"/>
    <property type="match status" value="1"/>
</dbReference>
<dbReference type="Pfam" id="PF00060">
    <property type="entry name" value="Lig_chan"/>
    <property type="match status" value="1"/>
</dbReference>
<dbReference type="Pfam" id="PF10613">
    <property type="entry name" value="Lig_chan-Glu_bd"/>
    <property type="match status" value="1"/>
</dbReference>
<dbReference type="PRINTS" id="PR00177">
    <property type="entry name" value="NMDARECEPTOR"/>
</dbReference>
<dbReference type="SMART" id="SM00918">
    <property type="entry name" value="Lig_chan-Glu_bd"/>
    <property type="match status" value="1"/>
</dbReference>
<dbReference type="SMART" id="SM00079">
    <property type="entry name" value="PBPe"/>
    <property type="match status" value="1"/>
</dbReference>
<dbReference type="SUPFAM" id="SSF53822">
    <property type="entry name" value="Periplasmic binding protein-like I"/>
    <property type="match status" value="1"/>
</dbReference>
<dbReference type="SUPFAM" id="SSF53850">
    <property type="entry name" value="Periplasmic binding protein-like II"/>
    <property type="match status" value="1"/>
</dbReference>
<dbReference type="SUPFAM" id="SSF81324">
    <property type="entry name" value="Voltage-gated potassium channels"/>
    <property type="match status" value="1"/>
</dbReference>
<keyword id="KW-0106">Calcium</keyword>
<keyword id="KW-1003">Cell membrane</keyword>
<keyword id="KW-1015">Disulfide bond</keyword>
<keyword id="KW-0325">Glycoprotein</keyword>
<keyword id="KW-0407">Ion channel</keyword>
<keyword id="KW-0406">Ion transport</keyword>
<keyword id="KW-1071">Ligand-gated ion channel</keyword>
<keyword id="KW-0460">Magnesium</keyword>
<keyword id="KW-0472">Membrane</keyword>
<keyword id="KW-0597">Phosphoprotein</keyword>
<keyword id="KW-0628">Postsynaptic cell membrane</keyword>
<keyword id="KW-0675">Receptor</keyword>
<keyword id="KW-1185">Reference proteome</keyword>
<keyword id="KW-0732">Signal</keyword>
<keyword id="KW-0770">Synapse</keyword>
<keyword id="KW-0812">Transmembrane</keyword>
<keyword id="KW-1133">Transmembrane helix</keyword>
<keyword id="KW-0813">Transport</keyword>
<comment type="function">
    <text evidence="2 4">NMDA receptor subtype of glutamate-gated ion channels with high calcium permeability and voltage-dependent sensitivity to magnesium. Mediated by glycine. This protein plays a key role in synaptic plasticity, synaptogenesis, excitotoxicity, memory acquisition and learning. It mediates neuronal functions in glutamate neurotransmission. Is involved in the cell surface targeting of NMDA receptors. Plays a role in associative learning and in long-term memory consolidation (By similarity).</text>
</comment>
<comment type="subunit">
    <text evidence="1">Forms a heteromeric NMDA channel with Nmdar2.</text>
</comment>
<comment type="subcellular location">
    <subcellularLocation>
        <location evidence="4">Cell membrane</location>
        <topology evidence="4">Multi-pass membrane protein</topology>
    </subcellularLocation>
    <subcellularLocation>
        <location evidence="4">Postsynaptic cell membrane</location>
    </subcellularLocation>
    <subcellularLocation>
        <location evidence="4">Postsynaptic density</location>
    </subcellularLocation>
</comment>
<comment type="similarity">
    <text evidence="7">Belongs to the glutamate-gated ion channel (TC 1.A.10.1) family.</text>
</comment>
<protein>
    <recommendedName>
        <fullName evidence="4">Glutamate [NMDA] receptor subunit 1</fullName>
    </recommendedName>
</protein>
<gene>
    <name evidence="4" type="primary">Nmdar1</name>
    <name type="ORF">GJ24560</name>
</gene>
<feature type="signal peptide" evidence="5">
    <location>
        <begin position="1"/>
        <end position="24"/>
    </location>
</feature>
<feature type="chain" id="PRO_0000364002" description="Glutamate [NMDA] receptor subunit 1" evidence="5">
    <location>
        <begin position="25"/>
        <end position="984"/>
    </location>
</feature>
<feature type="topological domain" description="Extracellular" evidence="5">
    <location>
        <begin position="25"/>
        <end position="570"/>
    </location>
</feature>
<feature type="transmembrane region" description="Helical" evidence="5">
    <location>
        <begin position="571"/>
        <end position="591"/>
    </location>
</feature>
<feature type="topological domain" description="Cytoplasmic" evidence="5">
    <location>
        <begin position="592"/>
        <end position="648"/>
    </location>
</feature>
<feature type="transmembrane region" description="Helical" evidence="5">
    <location>
        <begin position="649"/>
        <end position="669"/>
    </location>
</feature>
<feature type="topological domain" description="Extracellular" evidence="5">
    <location>
        <begin position="670"/>
        <end position="828"/>
    </location>
</feature>
<feature type="transmembrane region" description="Helical" evidence="5">
    <location>
        <begin position="829"/>
        <end position="849"/>
    </location>
</feature>
<feature type="topological domain" description="Cytoplasmic" evidence="5">
    <location>
        <begin position="850"/>
        <end position="984"/>
    </location>
</feature>
<feature type="region of interest" description="Disordered" evidence="6">
    <location>
        <begin position="947"/>
        <end position="984"/>
    </location>
</feature>
<feature type="compositionally biased region" description="Polar residues" evidence="6">
    <location>
        <begin position="974"/>
        <end position="984"/>
    </location>
</feature>
<feature type="binding site" evidence="2">
    <location>
        <begin position="527"/>
        <end position="529"/>
    </location>
    <ligand>
        <name>glycine</name>
        <dbReference type="ChEBI" id="CHEBI:57305"/>
    </ligand>
</feature>
<feature type="binding site" evidence="2">
    <location>
        <position position="534"/>
    </location>
    <ligand>
        <name>glycine</name>
        <dbReference type="ChEBI" id="CHEBI:57305"/>
    </ligand>
</feature>
<feature type="binding site" evidence="2">
    <location>
        <position position="700"/>
    </location>
    <ligand>
        <name>glycine</name>
        <dbReference type="ChEBI" id="CHEBI:57305"/>
    </ligand>
</feature>
<feature type="binding site" evidence="2">
    <location>
        <position position="744"/>
    </location>
    <ligand>
        <name>glycine</name>
        <dbReference type="ChEBI" id="CHEBI:57305"/>
    </ligand>
</feature>
<feature type="glycosylation site" description="N-linked (GlcNAc...) asparagine" evidence="5">
    <location>
        <position position="255"/>
    </location>
</feature>
<feature type="glycosylation site" description="N-linked (GlcNAc...) asparagine" evidence="5">
    <location>
        <position position="311"/>
    </location>
</feature>
<feature type="glycosylation site" description="N-linked (GlcNAc...) asparagine" evidence="5">
    <location>
        <position position="342"/>
    </location>
</feature>
<feature type="glycosylation site" description="N-linked (GlcNAc...) asparagine" evidence="5">
    <location>
        <position position="394"/>
    </location>
</feature>
<feature type="glycosylation site" description="N-linked (GlcNAc...) asparagine" evidence="5">
    <location>
        <position position="451"/>
    </location>
</feature>
<feature type="glycosylation site" description="N-linked (GlcNAc...) asparagine" evidence="5">
    <location>
        <position position="478"/>
    </location>
</feature>
<feature type="glycosylation site" description="N-linked (GlcNAc...) asparagine" evidence="5">
    <location>
        <position position="498"/>
    </location>
</feature>
<feature type="glycosylation site" description="N-linked (GlcNAc...) asparagine" evidence="5">
    <location>
        <position position="690"/>
    </location>
</feature>
<feature type="disulfide bond" description="Interchain" evidence="3">
    <location>
        <position position="90"/>
    </location>
</feature>
<evidence type="ECO:0000250" key="1"/>
<evidence type="ECO:0000250" key="2">
    <source>
        <dbReference type="UniProtKB" id="P35439"/>
    </source>
</evidence>
<evidence type="ECO:0000250" key="3">
    <source>
        <dbReference type="UniProtKB" id="Q05586"/>
    </source>
</evidence>
<evidence type="ECO:0000250" key="4">
    <source>
        <dbReference type="UniProtKB" id="Q24418"/>
    </source>
</evidence>
<evidence type="ECO:0000255" key="5"/>
<evidence type="ECO:0000256" key="6">
    <source>
        <dbReference type="SAM" id="MobiDB-lite"/>
    </source>
</evidence>
<evidence type="ECO:0000305" key="7"/>
<evidence type="ECO:0000312" key="8">
    <source>
        <dbReference type="EMBL" id="EDW68150.1"/>
    </source>
</evidence>
<name>NMDA1_DROVI</name>
<reference evidence="8" key="1">
    <citation type="journal article" date="2007" name="Nature">
        <title>Evolution of genes and genomes on the Drosophila phylogeny.</title>
        <authorList>
            <consortium name="Drosophila 12 genomes consortium"/>
        </authorList>
    </citation>
    <scope>NUCLEOTIDE SEQUENCE [LARGE SCALE GENOMIC DNA]</scope>
    <source>
        <strain evidence="8">Tucson 15010-1051.87</strain>
    </source>
</reference>
<accession>B4LZB5</accession>